<reference key="1">
    <citation type="submission" date="2002-06" db="EMBL/GenBank/DDBJ databases">
        <title>Evolution of the DMSO-reductase superfamily: A diverse group of Molybdopterin-containing enzymes.</title>
        <authorList>
            <person name="Abt D.J."/>
            <person name="Brinkmann H."/>
            <person name="Meyer A."/>
            <person name="Schink B."/>
            <person name="Kroneck P.M.H."/>
        </authorList>
    </citation>
    <scope>NUCLEOTIDE SEQUENCE [GENOMIC DNA]</scope>
    <source>
        <strain>DSM 3246 / NBRC 103808 / WoAcy1</strain>
    </source>
</reference>
<reference key="2">
    <citation type="journal article" date="1995" name="J. Bacteriol.">
        <title>Purification and characterization of acetylene hydratase of Pelobacter acetylenicus, a tungsten iron-sulfur protein.</title>
        <authorList>
            <person name="Rosner B.M."/>
            <person name="Schink B."/>
        </authorList>
    </citation>
    <scope>PROTEIN SEQUENCE OF 2-20</scope>
    <scope>FUNCTION</scope>
    <scope>CATALYTIC ACTIVITY</scope>
    <scope>SUBUNIT</scope>
    <scope>BIOPHYSICOCHEMICAL PROPERTIES</scope>
</reference>
<reference key="3">
    <citation type="journal article" date="1999" name="Eur. J. Biochem.">
        <title>Acetylene hydratase of Pelobacter acetylenicus. Molecular and spectroscopic properties of the tungsten iron-sulfur enzyme.</title>
        <authorList>
            <person name="Meckenstock R.U."/>
            <person name="Krieger R."/>
            <person name="Ensign S."/>
            <person name="Kroneck P.M."/>
            <person name="Schink B."/>
        </authorList>
    </citation>
    <scope>COFACTOR</scope>
</reference>
<reference key="4">
    <citation type="journal article" date="2011" name="J. Bacteriol.">
        <title>Exploring the active site of the tungsten, iron-sulfur enzyme acetylene hydratase.</title>
        <authorList>
            <person name="Tenbrink F."/>
            <person name="Schink B."/>
            <person name="Kroneck P.M."/>
        </authorList>
    </citation>
    <scope>MUTAGENESIS OF ASP-13; LYS-48 AND ILE-142</scope>
</reference>
<reference key="5">
    <citation type="journal article" date="2007" name="Proc. Natl. Acad. Sci. U.S.A.">
        <title>Structure of the non-redox-active tungsten/[4Fe:4S] enzyme acetylene hydratase.</title>
        <authorList>
            <person name="Seiffert G.B."/>
            <person name="Ullmann G.M."/>
            <person name="Messerschmidt A."/>
            <person name="Schink B."/>
            <person name="Kroneck P.M."/>
            <person name="Einsle O."/>
        </authorList>
    </citation>
    <scope>X-RAY CRYSTALLOGRAPHY (1.26 ANGSTROMS) OF 4-730 IN COMPLEX WITH IRON-SULFUR (4FE-4S) AND W-BIS-MGD</scope>
    <scope>COFACTOR</scope>
    <scope>REACTION MECHANISM</scope>
</reference>
<comment type="function">
    <text evidence="3">Catalyzes the hydration of acetylene to form acetaldehyde. Ethylene cannot act as a substrate.</text>
</comment>
<comment type="catalytic activity">
    <reaction evidence="3">
        <text>acetaldehyde = acetylene + H2O</text>
        <dbReference type="Rhea" id="RHEA:17885"/>
        <dbReference type="ChEBI" id="CHEBI:15343"/>
        <dbReference type="ChEBI" id="CHEBI:15377"/>
        <dbReference type="ChEBI" id="CHEBI:27518"/>
        <dbReference type="EC" id="4.2.1.112"/>
    </reaction>
</comment>
<comment type="cofactor">
    <cofactor evidence="1">
        <name>[4Fe-4S] cluster</name>
        <dbReference type="ChEBI" id="CHEBI:49883"/>
    </cofactor>
    <text evidence="1">Binds 1 [4Fe-4S] cluster.</text>
</comment>
<comment type="cofactor">
    <cofactor evidence="1">
        <name>W-bis(molybdopterin guanine dinucleotide)</name>
        <dbReference type="ChEBI" id="CHEBI:60537"/>
    </cofactor>
    <text evidence="1">Binds 1 W-bis(molybdopterin guanine dinucleotide) (W-bis-MGD) cofactor per subunit.</text>
</comment>
<comment type="biophysicochemical properties">
    <kinetics>
        <KM evidence="3">14 uM for acetylene</KM>
        <Vmax evidence="3">69.0 umol/min/mg enzyme</Vmax>
    </kinetics>
    <phDependence>
        <text evidence="3">Optimum pH is 6.0-6.5.</text>
    </phDependence>
    <temperatureDependence>
        <text evidence="3">Optimum temperature is 50 degrees Celsius.</text>
    </temperatureDependence>
</comment>
<comment type="subunit">
    <text evidence="1 3">Monomer.</text>
</comment>
<comment type="miscellaneous">
    <text evidence="5">The tungsten center binds a water molecule that is activated by Asp-13 residue, enabling it to attack acetylene bound in a distinct hydrophobic pocket.</text>
</comment>
<comment type="similarity">
    <text evidence="4">Belongs to the prokaryotic molybdopterin-containing oxidoreductase family.</text>
</comment>
<sequence length="730" mass="81851">MASKKHVVCQSCDINCVVEAEVKADGKIQTKSISEPHPTTPPNSICMKSVNADTIRTHKDRVLYPLKNVGSKRGEQRWERISWDQALDEIAEKLKKIIAKYGPESLGVSQTEINQQSEYGTLRRFMNLLGSPNWTSAMYMCIGNTAGVHRVTHGSYSFASFADSNCLLFIGKNLSNHNWVSQFNDLKAALKRGCKLIVLDPRRTKVAEMADIWLPLRYGTDAALFLGMINVIINEQLYDKEFVENWCVGFEELKERVQEYPLDKVAEITGCDAGEIRKAAVMFATESPASIPWAVSTDMQKNSCSAIRAQCILRAIVGSFVNGAEILGAPHSDLVPISKIQMHEALPEEKKKLQLGTETYPFLTYTGMSALEEPSERVYGVKYFHNMGAFMANPTALFTAMATEKPYPVKAFFALASNALMGYANQQNALKGLMNQDLVVCYDQFMTPTAQLADYVLPGDHWLERPVVQPNWEGIPFGNTSQQVVEPAGEAKDEYYFIRELAVRMGLEEHFPWKDRLELINYRISPTGMEWEEYQKQYTYMSKLPDYFGPEGVGVATPSGKVELYSSVFEKLGYDPLPYYHEPLQTEISDPELAKEYPLILFAGLREDSNFQSCYHQPGILRDAEPDPVALLHPKTAQSLGLPSGEWIWVETTHGRLKLLLKHDGAQPEGTIRIPHGRWCPEQEGGPETGFSGAMLHNDAMVLSDDDWNLDPEQGLPNLRGGILAKAYKC</sequence>
<accession>Q71EW5</accession>
<organism>
    <name type="scientific">Syntrophotalea acetylenica</name>
    <name type="common">Pelobacter acetylenicus</name>
    <dbReference type="NCBI Taxonomy" id="29542"/>
    <lineage>
        <taxon>Bacteria</taxon>
        <taxon>Pseudomonadati</taxon>
        <taxon>Thermodesulfobacteriota</taxon>
        <taxon>Desulfuromonadia</taxon>
        <taxon>Desulfuromonadales</taxon>
        <taxon>Syntrophotaleaceae</taxon>
        <taxon>Syntrophotalea</taxon>
    </lineage>
</organism>
<evidence type="ECO:0000269" key="1">
    <source>
    </source>
</evidence>
<evidence type="ECO:0000269" key="2">
    <source>
    </source>
</evidence>
<evidence type="ECO:0000269" key="3">
    <source>
    </source>
</evidence>
<evidence type="ECO:0000305" key="4"/>
<evidence type="ECO:0000305" key="5">
    <source>
    </source>
</evidence>
<evidence type="ECO:0007829" key="6">
    <source>
        <dbReference type="PDB" id="2E7Z"/>
    </source>
</evidence>
<keyword id="KW-0002">3D-structure</keyword>
<keyword id="KW-0004">4Fe-4S</keyword>
<keyword id="KW-0903">Direct protein sequencing</keyword>
<keyword id="KW-0408">Iron</keyword>
<keyword id="KW-0411">Iron-sulfur</keyword>
<keyword id="KW-0456">Lyase</keyword>
<keyword id="KW-0479">Metal-binding</keyword>
<keyword id="KW-0826">Tungsten</keyword>
<proteinExistence type="evidence at protein level"/>
<protein>
    <recommendedName>
        <fullName>Acetylene hydratase</fullName>
        <shortName>Ahy</shortName>
        <ecNumber evidence="3">4.2.1.112</ecNumber>
    </recommendedName>
</protein>
<feature type="initiator methionine" description="Removed" evidence="3">
    <location>
        <position position="1"/>
    </location>
</feature>
<feature type="chain" id="PRO_0000418733" description="Acetylene hydratase">
    <location>
        <begin position="2"/>
        <end position="730"/>
    </location>
</feature>
<feature type="active site">
    <location>
        <position position="13"/>
    </location>
</feature>
<feature type="binding site" evidence="1">
    <location>
        <position position="9"/>
    </location>
    <ligand>
        <name>[4Fe-4S] cluster</name>
        <dbReference type="ChEBI" id="CHEBI:49883"/>
    </ligand>
</feature>
<feature type="binding site" evidence="1">
    <location>
        <position position="12"/>
    </location>
    <ligand>
        <name>[4Fe-4S] cluster</name>
        <dbReference type="ChEBI" id="CHEBI:49883"/>
    </ligand>
</feature>
<feature type="binding site" evidence="1">
    <location>
        <position position="16"/>
    </location>
    <ligand>
        <name>[4Fe-4S] cluster</name>
        <dbReference type="ChEBI" id="CHEBI:49883"/>
    </ligand>
</feature>
<feature type="binding site" evidence="1">
    <location>
        <position position="46"/>
    </location>
    <ligand>
        <name>[4Fe-4S] cluster</name>
        <dbReference type="ChEBI" id="CHEBI:49883"/>
    </ligand>
</feature>
<feature type="binding site" evidence="1">
    <location>
        <position position="48"/>
    </location>
    <ligand>
        <name>W-bis(molybdopterin guanine dinucleotide)</name>
        <dbReference type="ChEBI" id="CHEBI:60537"/>
    </ligand>
</feature>
<feature type="binding site" evidence="1">
    <location>
        <begin position="111"/>
        <end position="114"/>
    </location>
    <ligand>
        <name>W-bis(molybdopterin guanine dinucleotide)</name>
        <dbReference type="ChEBI" id="CHEBI:60537"/>
    </ligand>
</feature>
<feature type="binding site" evidence="1">
    <location>
        <position position="141"/>
    </location>
    <ligand>
        <name>W-bis(molybdopterin guanine dinucleotide)</name>
        <dbReference type="ChEBI" id="CHEBI:60537"/>
    </ligand>
    <ligandPart>
        <name>W</name>
        <dbReference type="ChEBI" id="CHEBI:27998"/>
    </ligandPart>
</feature>
<feature type="binding site" evidence="1">
    <location>
        <begin position="172"/>
        <end position="173"/>
    </location>
    <ligand>
        <name>W-bis(molybdopterin guanine dinucleotide)</name>
        <dbReference type="ChEBI" id="CHEBI:60537"/>
    </ligand>
</feature>
<feature type="binding site" evidence="1">
    <location>
        <begin position="177"/>
        <end position="179"/>
    </location>
    <ligand>
        <name>W-bis(molybdopterin guanine dinucleotide)</name>
        <dbReference type="ChEBI" id="CHEBI:60537"/>
    </ligand>
</feature>
<feature type="binding site" evidence="1">
    <location>
        <begin position="199"/>
        <end position="202"/>
    </location>
    <ligand>
        <name>W-bis(molybdopterin guanine dinucleotide)</name>
        <dbReference type="ChEBI" id="CHEBI:60537"/>
    </ligand>
</feature>
<feature type="binding site" evidence="1">
    <location>
        <begin position="218"/>
        <end position="221"/>
    </location>
    <ligand>
        <name>W-bis(molybdopterin guanine dinucleotide)</name>
        <dbReference type="ChEBI" id="CHEBI:60537"/>
    </ligand>
</feature>
<feature type="binding site" evidence="1">
    <location>
        <position position="296"/>
    </location>
    <ligand>
        <name>W-bis(molybdopterin guanine dinucleotide)</name>
        <dbReference type="ChEBI" id="CHEBI:60537"/>
    </ligand>
</feature>
<feature type="binding site" evidence="1">
    <location>
        <position position="300"/>
    </location>
    <ligand>
        <name>W-bis(molybdopterin guanine dinucleotide)</name>
        <dbReference type="ChEBI" id="CHEBI:60537"/>
    </ligand>
</feature>
<feature type="binding site" evidence="1">
    <location>
        <begin position="416"/>
        <end position="418"/>
    </location>
    <ligand>
        <name>W-bis(molybdopterin guanine dinucleotide)</name>
        <dbReference type="ChEBI" id="CHEBI:60537"/>
    </ligand>
</feature>
<feature type="binding site" evidence="1">
    <location>
        <begin position="422"/>
        <end position="423"/>
    </location>
    <ligand>
        <name>W-bis(molybdopterin guanine dinucleotide)</name>
        <dbReference type="ChEBI" id="CHEBI:60537"/>
    </ligand>
</feature>
<feature type="binding site" evidence="1">
    <location>
        <begin position="442"/>
        <end position="444"/>
    </location>
    <ligand>
        <name>W-bis(molybdopterin guanine dinucleotide)</name>
        <dbReference type="ChEBI" id="CHEBI:60537"/>
    </ligand>
</feature>
<feature type="binding site" evidence="1">
    <location>
        <position position="460"/>
    </location>
    <ligand>
        <name>W-bis(molybdopterin guanine dinucleotide)</name>
        <dbReference type="ChEBI" id="CHEBI:60537"/>
    </ligand>
</feature>
<feature type="binding site" evidence="1">
    <location>
        <position position="465"/>
    </location>
    <ligand>
        <name>W-bis(molybdopterin guanine dinucleotide)</name>
        <dbReference type="ChEBI" id="CHEBI:60537"/>
    </ligand>
</feature>
<feature type="binding site" evidence="1">
    <location>
        <begin position="602"/>
        <end position="613"/>
    </location>
    <ligand>
        <name>W-bis(molybdopterin guanine dinucleotide)</name>
        <dbReference type="ChEBI" id="CHEBI:60537"/>
    </ligand>
</feature>
<feature type="binding site" evidence="1">
    <location>
        <position position="606"/>
    </location>
    <ligand>
        <name>W-bis(molybdopterin guanine dinucleotide)</name>
        <dbReference type="ChEBI" id="CHEBI:60537"/>
    </ligand>
</feature>
<feature type="binding site" evidence="1">
    <location>
        <position position="676"/>
    </location>
    <ligand>
        <name>W-bis(molybdopterin guanine dinucleotide)</name>
        <dbReference type="ChEBI" id="CHEBI:60537"/>
    </ligand>
</feature>
<feature type="binding site" evidence="1">
    <location>
        <position position="699"/>
    </location>
    <ligand>
        <name>W-bis(molybdopterin guanine dinucleotide)</name>
        <dbReference type="ChEBI" id="CHEBI:60537"/>
    </ligand>
</feature>
<feature type="binding site" evidence="1">
    <location>
        <position position="720"/>
    </location>
    <ligand>
        <name>W-bis(molybdopterin guanine dinucleotide)</name>
        <dbReference type="ChEBI" id="CHEBI:60537"/>
    </ligand>
</feature>
<feature type="mutagenesis site" description="Almost abolishes catalytic activity." evidence="2">
    <original>D</original>
    <variation>A</variation>
    <location>
        <position position="13"/>
    </location>
</feature>
<feature type="mutagenesis site" description="Does not affect catalytic activity." evidence="2">
    <original>D</original>
    <variation>E</variation>
    <location>
        <position position="13"/>
    </location>
</feature>
<feature type="mutagenesis site" description="Does not affect catalytic activity." evidence="2">
    <original>K</original>
    <variation>A</variation>
    <location>
        <position position="48"/>
    </location>
</feature>
<feature type="mutagenesis site" description="Strongly impairs catalytic activity." evidence="2">
    <original>I</original>
    <variation>A</variation>
    <location>
        <position position="142"/>
    </location>
</feature>
<feature type="sequence conflict" description="In Ref. 2; AA sequence." evidence="4" ref="2">
    <original>S</original>
    <variation>C</variation>
    <location>
        <position position="11"/>
    </location>
</feature>
<feature type="strand" evidence="6">
    <location>
        <begin position="5"/>
        <end position="8"/>
    </location>
</feature>
<feature type="strand" evidence="6">
    <location>
        <begin position="17"/>
        <end position="22"/>
    </location>
</feature>
<feature type="strand" evidence="6">
    <location>
        <begin position="28"/>
        <end position="32"/>
    </location>
</feature>
<feature type="strand" evidence="6">
    <location>
        <begin position="38"/>
        <end position="40"/>
    </location>
</feature>
<feature type="helix" evidence="6">
    <location>
        <begin position="47"/>
        <end position="50"/>
    </location>
</feature>
<feature type="helix" evidence="6">
    <location>
        <begin position="52"/>
        <end position="56"/>
    </location>
</feature>
<feature type="strand" evidence="6">
    <location>
        <begin position="66"/>
        <end position="68"/>
    </location>
</feature>
<feature type="strand" evidence="6">
    <location>
        <begin position="70"/>
        <end position="72"/>
    </location>
</feature>
<feature type="strand" evidence="6">
    <location>
        <begin position="78"/>
        <end position="80"/>
    </location>
</feature>
<feature type="helix" evidence="6">
    <location>
        <begin position="83"/>
        <end position="101"/>
    </location>
</feature>
<feature type="helix" evidence="6">
    <location>
        <begin position="103"/>
        <end position="105"/>
    </location>
</feature>
<feature type="strand" evidence="6">
    <location>
        <begin position="106"/>
        <end position="110"/>
    </location>
</feature>
<feature type="helix" evidence="6">
    <location>
        <begin position="112"/>
        <end position="114"/>
    </location>
</feature>
<feature type="helix" evidence="6">
    <location>
        <begin position="121"/>
        <end position="129"/>
    </location>
</feature>
<feature type="helix" evidence="6">
    <location>
        <begin position="137"/>
        <end position="140"/>
    </location>
</feature>
<feature type="helix" evidence="6">
    <location>
        <begin position="143"/>
        <end position="153"/>
    </location>
</feature>
<feature type="strand" evidence="6">
    <location>
        <begin position="157"/>
        <end position="159"/>
    </location>
</feature>
<feature type="turn" evidence="6">
    <location>
        <begin position="161"/>
        <end position="163"/>
    </location>
</feature>
<feature type="strand" evidence="6">
    <location>
        <begin position="165"/>
        <end position="171"/>
    </location>
</feature>
<feature type="helix" evidence="6">
    <location>
        <begin position="180"/>
        <end position="191"/>
    </location>
</feature>
<feature type="strand" evidence="6">
    <location>
        <begin position="195"/>
        <end position="199"/>
    </location>
</feature>
<feature type="helix" evidence="6">
    <location>
        <begin position="205"/>
        <end position="209"/>
    </location>
</feature>
<feature type="strand" evidence="6">
    <location>
        <begin position="211"/>
        <end position="214"/>
    </location>
</feature>
<feature type="helix" evidence="6">
    <location>
        <begin position="221"/>
        <end position="234"/>
    </location>
</feature>
<feature type="helix" evidence="6">
    <location>
        <begin position="240"/>
        <end position="246"/>
    </location>
</feature>
<feature type="helix" evidence="6">
    <location>
        <begin position="250"/>
        <end position="257"/>
    </location>
</feature>
<feature type="helix" evidence="6">
    <location>
        <begin position="262"/>
        <end position="269"/>
    </location>
</feature>
<feature type="helix" evidence="6">
    <location>
        <begin position="273"/>
        <end position="285"/>
    </location>
</feature>
<feature type="strand" evidence="6">
    <location>
        <begin position="286"/>
        <end position="290"/>
    </location>
</feature>
<feature type="helix" evidence="6">
    <location>
        <begin position="296"/>
        <end position="298"/>
    </location>
</feature>
<feature type="helix" evidence="6">
    <location>
        <begin position="303"/>
        <end position="317"/>
    </location>
</feature>
<feature type="turn" evidence="6">
    <location>
        <begin position="318"/>
        <end position="321"/>
    </location>
</feature>
<feature type="strand" evidence="6">
    <location>
        <begin position="322"/>
        <end position="327"/>
    </location>
</feature>
<feature type="helix" evidence="6">
    <location>
        <begin position="337"/>
        <end position="340"/>
    </location>
</feature>
<feature type="helix" evidence="6">
    <location>
        <begin position="343"/>
        <end position="345"/>
    </location>
</feature>
<feature type="helix" evidence="6">
    <location>
        <begin position="348"/>
        <end position="353"/>
    </location>
</feature>
<feature type="turn" evidence="6">
    <location>
        <begin position="355"/>
        <end position="359"/>
    </location>
</feature>
<feature type="helix" evidence="6">
    <location>
        <begin position="361"/>
        <end position="363"/>
    </location>
</feature>
<feature type="helix" evidence="6">
    <location>
        <begin position="365"/>
        <end position="368"/>
    </location>
</feature>
<feature type="helix" evidence="6">
    <location>
        <begin position="369"/>
        <end position="371"/>
    </location>
</feature>
<feature type="helix" evidence="6">
    <location>
        <begin position="372"/>
        <end position="379"/>
    </location>
</feature>
<feature type="helix" evidence="6">
    <location>
        <begin position="394"/>
        <end position="403"/>
    </location>
</feature>
<feature type="strand" evidence="6">
    <location>
        <begin position="411"/>
        <end position="416"/>
    </location>
</feature>
<feature type="helix" evidence="6">
    <location>
        <begin position="419"/>
        <end position="421"/>
    </location>
</feature>
<feature type="strand" evidence="6">
    <location>
        <begin position="422"/>
        <end position="424"/>
    </location>
</feature>
<feature type="helix" evidence="6">
    <location>
        <begin position="426"/>
        <end position="434"/>
    </location>
</feature>
<feature type="strand" evidence="6">
    <location>
        <begin position="437"/>
        <end position="445"/>
    </location>
</feature>
<feature type="helix" evidence="6">
    <location>
        <begin position="450"/>
        <end position="452"/>
    </location>
</feature>
<feature type="strand" evidence="6">
    <location>
        <begin position="454"/>
        <end position="459"/>
    </location>
</feature>
<feature type="helix" evidence="6">
    <location>
        <begin position="462"/>
        <end position="464"/>
    </location>
</feature>
<feature type="strand" evidence="6">
    <location>
        <begin position="476"/>
        <end position="479"/>
    </location>
</feature>
<feature type="helix" evidence="6">
    <location>
        <begin position="494"/>
        <end position="504"/>
    </location>
</feature>
<feature type="helix" evidence="6">
    <location>
        <begin position="508"/>
        <end position="510"/>
    </location>
</feature>
<feature type="helix" evidence="6">
    <location>
        <begin position="516"/>
        <end position="523"/>
    </location>
</feature>
<feature type="helix" evidence="6">
    <location>
        <begin position="525"/>
        <end position="527"/>
    </location>
</feature>
<feature type="helix" evidence="6">
    <location>
        <begin position="531"/>
        <end position="534"/>
    </location>
</feature>
<feature type="strand" evidence="6">
    <location>
        <begin position="537"/>
        <end position="541"/>
    </location>
</feature>
<feature type="strand" evidence="6">
    <location>
        <begin position="556"/>
        <end position="565"/>
    </location>
</feature>
<feature type="helix" evidence="6">
    <location>
        <begin position="567"/>
        <end position="572"/>
    </location>
</feature>
<feature type="strand" evidence="6">
    <location>
        <begin position="584"/>
        <end position="586"/>
    </location>
</feature>
<feature type="turn" evidence="6">
    <location>
        <begin position="587"/>
        <end position="589"/>
    </location>
</feature>
<feature type="helix" evidence="6">
    <location>
        <begin position="591"/>
        <end position="596"/>
    </location>
</feature>
<feature type="strand" evidence="6">
    <location>
        <begin position="599"/>
        <end position="603"/>
    </location>
</feature>
<feature type="helix" evidence="6">
    <location>
        <begin position="620"/>
        <end position="624"/>
    </location>
</feature>
<feature type="strand" evidence="6">
    <location>
        <begin position="629"/>
        <end position="632"/>
    </location>
</feature>
<feature type="helix" evidence="6">
    <location>
        <begin position="634"/>
        <end position="640"/>
    </location>
</feature>
<feature type="strand" evidence="6">
    <location>
        <begin position="646"/>
        <end position="651"/>
    </location>
</feature>
<feature type="strand" evidence="6">
    <location>
        <begin position="656"/>
        <end position="663"/>
    </location>
</feature>
<feature type="strand" evidence="6">
    <location>
        <begin position="671"/>
        <end position="674"/>
    </location>
</feature>
<feature type="helix" evidence="6">
    <location>
        <begin position="687"/>
        <end position="689"/>
    </location>
</feature>
<feature type="turn" evidence="6">
    <location>
        <begin position="690"/>
        <end position="693"/>
    </location>
</feature>
<feature type="helix" evidence="6">
    <location>
        <begin position="694"/>
        <end position="697"/>
    </location>
</feature>
<feature type="helix" evidence="6">
    <location>
        <begin position="699"/>
        <end position="702"/>
    </location>
</feature>
<feature type="helix" evidence="6">
    <location>
        <begin position="707"/>
        <end position="709"/>
    </location>
</feature>
<feature type="turn" evidence="6">
    <location>
        <begin position="712"/>
        <end position="714"/>
    </location>
</feature>
<feature type="strand" evidence="6">
    <location>
        <begin position="720"/>
        <end position="729"/>
    </location>
</feature>
<dbReference type="EC" id="4.2.1.112" evidence="3"/>
<dbReference type="EMBL" id="AF518725">
    <property type="protein sequence ID" value="AAQ08379.1"/>
    <property type="molecule type" value="Genomic_DNA"/>
</dbReference>
<dbReference type="PDB" id="2E7Z">
    <property type="method" value="X-ray"/>
    <property type="resolution" value="1.26 A"/>
    <property type="chains" value="A=4-730"/>
</dbReference>
<dbReference type="PDBsum" id="2E7Z"/>
<dbReference type="SMR" id="Q71EW5"/>
<dbReference type="STRING" id="29542.A6070_04635"/>
<dbReference type="KEGG" id="ag:AAQ08379"/>
<dbReference type="BioCyc" id="MetaCyc:MONOMER-941"/>
<dbReference type="BRENDA" id="4.2.1.112">
    <property type="organism ID" value="8840"/>
</dbReference>
<dbReference type="EvolutionaryTrace" id="Q71EW5"/>
<dbReference type="GO" id="GO:0051539">
    <property type="term" value="F:4 iron, 4 sulfur cluster binding"/>
    <property type="evidence" value="ECO:0000314"/>
    <property type="project" value="UniProtKB"/>
</dbReference>
<dbReference type="GO" id="GO:0018818">
    <property type="term" value="F:acetylene hydratase activity"/>
    <property type="evidence" value="ECO:0000314"/>
    <property type="project" value="UniProtKB"/>
</dbReference>
<dbReference type="GO" id="GO:0046872">
    <property type="term" value="F:metal ion binding"/>
    <property type="evidence" value="ECO:0007669"/>
    <property type="project" value="UniProtKB-KW"/>
</dbReference>
<dbReference type="GO" id="GO:0043546">
    <property type="term" value="F:molybdopterin cofactor binding"/>
    <property type="evidence" value="ECO:0000314"/>
    <property type="project" value="UniProtKB"/>
</dbReference>
<dbReference type="GO" id="GO:0016491">
    <property type="term" value="F:oxidoreductase activity"/>
    <property type="evidence" value="ECO:0007669"/>
    <property type="project" value="InterPro"/>
</dbReference>
<dbReference type="CDD" id="cd02759">
    <property type="entry name" value="MopB_Acetylene-hydratase"/>
    <property type="match status" value="1"/>
</dbReference>
<dbReference type="CDD" id="cd02781">
    <property type="entry name" value="MopB_CT_Acetylene-hydratase"/>
    <property type="match status" value="1"/>
</dbReference>
<dbReference type="FunFam" id="2.40.40.20:FF:000049">
    <property type="entry name" value="Acetylene hydratase"/>
    <property type="match status" value="1"/>
</dbReference>
<dbReference type="Gene3D" id="2.40.40.20">
    <property type="match status" value="1"/>
</dbReference>
<dbReference type="Gene3D" id="3.40.50.740">
    <property type="match status" value="1"/>
</dbReference>
<dbReference type="Gene3D" id="2.20.25.90">
    <property type="entry name" value="ADC-like domains"/>
    <property type="match status" value="1"/>
</dbReference>
<dbReference type="Gene3D" id="3.40.228.10">
    <property type="entry name" value="Dimethylsulfoxide Reductase, domain 2"/>
    <property type="match status" value="1"/>
</dbReference>
<dbReference type="InterPro" id="IPR041930">
    <property type="entry name" value="Acetylene_hydratase"/>
</dbReference>
<dbReference type="InterPro" id="IPR009010">
    <property type="entry name" value="Asp_de-COase-like_dom_sf"/>
</dbReference>
<dbReference type="InterPro" id="IPR037949">
    <property type="entry name" value="MopB_CT_Acetylene-hydratase"/>
</dbReference>
<dbReference type="InterPro" id="IPR006657">
    <property type="entry name" value="MoPterin_dinucl-bd_dom"/>
</dbReference>
<dbReference type="InterPro" id="IPR006656">
    <property type="entry name" value="Mopterin_OxRdtase"/>
</dbReference>
<dbReference type="InterPro" id="IPR050612">
    <property type="entry name" value="Prok_Mopterin_Oxidored"/>
</dbReference>
<dbReference type="PANTHER" id="PTHR43742:SF6">
    <property type="entry name" value="OXIDOREDUCTASE YYAE-RELATED"/>
    <property type="match status" value="1"/>
</dbReference>
<dbReference type="PANTHER" id="PTHR43742">
    <property type="entry name" value="TRIMETHYLAMINE-N-OXIDE REDUCTASE"/>
    <property type="match status" value="1"/>
</dbReference>
<dbReference type="Pfam" id="PF00384">
    <property type="entry name" value="Molybdopterin"/>
    <property type="match status" value="1"/>
</dbReference>
<dbReference type="Pfam" id="PF01568">
    <property type="entry name" value="Molydop_binding"/>
    <property type="match status" value="1"/>
</dbReference>
<dbReference type="SUPFAM" id="SSF50692">
    <property type="entry name" value="ADC-like"/>
    <property type="match status" value="1"/>
</dbReference>
<dbReference type="SUPFAM" id="SSF53706">
    <property type="entry name" value="Formate dehydrogenase/DMSO reductase, domains 1-3"/>
    <property type="match status" value="1"/>
</dbReference>
<name>AHY_SYNAC</name>